<accession>A7TSA8</accession>
<name>PESC_VANPO</name>
<organism>
    <name type="scientific">Vanderwaltozyma polyspora (strain ATCC 22028 / DSM 70294 / BCRC 21397 / CBS 2163 / NBRC 10782 / NRRL Y-8283 / UCD 57-17)</name>
    <name type="common">Kluyveromyces polysporus</name>
    <dbReference type="NCBI Taxonomy" id="436907"/>
    <lineage>
        <taxon>Eukaryota</taxon>
        <taxon>Fungi</taxon>
        <taxon>Dikarya</taxon>
        <taxon>Ascomycota</taxon>
        <taxon>Saccharomycotina</taxon>
        <taxon>Saccharomycetes</taxon>
        <taxon>Saccharomycetales</taxon>
        <taxon>Saccharomycetaceae</taxon>
        <taxon>Vanderwaltozyma</taxon>
    </lineage>
</organism>
<proteinExistence type="inferred from homology"/>
<gene>
    <name evidence="1" type="primary">NOP7</name>
    <name type="ORF">Kpol_359p6</name>
</gene>
<comment type="function">
    <text evidence="1">Component of the NOP7 complex, which is required for maturation of the 25S and 5.8S ribosomal RNAs and formation of the 60S ribosome.</text>
</comment>
<comment type="subunit">
    <text evidence="1">Component of the NOP7 complex, composed of ERB1, NOP7 and YTM1. The complex is held together by ERB1, which interacts with NOP7 via its N-terminal domain and with YTM1 via a high-affinity interaction between the seven-bladed beta-propeller domains of the 2 proteins. The NOP7 complex associates with the 66S pre-ribosome.</text>
</comment>
<comment type="subcellular location">
    <subcellularLocation>
        <location evidence="1">Nucleus</location>
        <location evidence="1">Nucleolus</location>
    </subcellularLocation>
    <subcellularLocation>
        <location evidence="1">Nucleus</location>
        <location evidence="1">Nucleoplasm</location>
    </subcellularLocation>
</comment>
<comment type="similarity">
    <text evidence="1">Belongs to the pescadillo family.</text>
</comment>
<sequence>MRIKKKNTSGNAKNFVTRSQAVRKLQVSLADFRRLCIFKGIYPREPRNKKKANKGSTAPTTFYYAKDIQYLMHEPVLNKFREHKTFAKKLTRALGRGEVSSAKKLDENRTSYKLDHIIKERYPSFPDAVRDIDDALNMLFLFANLPATDQVSSKITKDANEICNQWLAYVARERLVRKVFVSIKGVYYQASIRGEDVRWLVPFKFPENIPSDIDFRIMLTFLEFYSTLLHFVLYKLYTDSDLVYPPKVDIAKNKIISGLSSYILESETEENVLTATKLSEPTGETSNIDSETLKLAMKADENVDDTNPEDEQTENVETVELDAFQDNNKNKGDILAQPSQYESPVSTLFSDFVFYVGREVPIDILEFLILSCGGSVISEAALDKLETKDIDFSKVTHQIVDRPVLKNKVAGRTYIQPQWIFDCLNKAKLVPANLYLPGETLPPHLSPWGDASGYDPNVSDAEEEGEDDEDEDSEEGSGAEVEENVDEDEDDEELRAQKELELEAQGVKYSDIKDTEVKSKNKKRKAASTEAEEEKDLKMIMMSNKQRKLYKKMKYSNAKKEEKVENLKKKKKQISKTKEKLTKLEGKK</sequence>
<dbReference type="EMBL" id="DS480504">
    <property type="protein sequence ID" value="EDO14845.1"/>
    <property type="molecule type" value="Genomic_DNA"/>
</dbReference>
<dbReference type="RefSeq" id="XP_001642703.1">
    <property type="nucleotide sequence ID" value="XM_001642653.1"/>
</dbReference>
<dbReference type="SMR" id="A7TSA8"/>
<dbReference type="FunCoup" id="A7TSA8">
    <property type="interactions" value="1431"/>
</dbReference>
<dbReference type="STRING" id="436907.A7TSA8"/>
<dbReference type="GeneID" id="5542873"/>
<dbReference type="KEGG" id="vpo:Kpol_359p6"/>
<dbReference type="eggNOG" id="KOG2481">
    <property type="taxonomic scope" value="Eukaryota"/>
</dbReference>
<dbReference type="HOGENOM" id="CLU_019619_1_1_1"/>
<dbReference type="InParanoid" id="A7TSA8"/>
<dbReference type="OMA" id="QKVTWIV"/>
<dbReference type="OrthoDB" id="10264910at2759"/>
<dbReference type="PhylomeDB" id="A7TSA8"/>
<dbReference type="Proteomes" id="UP000000267">
    <property type="component" value="Unassembled WGS sequence"/>
</dbReference>
<dbReference type="GO" id="GO:0005654">
    <property type="term" value="C:nucleoplasm"/>
    <property type="evidence" value="ECO:0007669"/>
    <property type="project" value="UniProtKB-SubCell"/>
</dbReference>
<dbReference type="GO" id="GO:0070545">
    <property type="term" value="C:PeBoW complex"/>
    <property type="evidence" value="ECO:0007669"/>
    <property type="project" value="EnsemblFungi"/>
</dbReference>
<dbReference type="GO" id="GO:0030687">
    <property type="term" value="C:preribosome, large subunit precursor"/>
    <property type="evidence" value="ECO:0007669"/>
    <property type="project" value="UniProtKB-UniRule"/>
</dbReference>
<dbReference type="GO" id="GO:0070180">
    <property type="term" value="F:large ribosomal subunit rRNA binding"/>
    <property type="evidence" value="ECO:0007669"/>
    <property type="project" value="EnsemblFungi"/>
</dbReference>
<dbReference type="GO" id="GO:0043021">
    <property type="term" value="F:ribonucleoprotein complex binding"/>
    <property type="evidence" value="ECO:0007669"/>
    <property type="project" value="UniProtKB-UniRule"/>
</dbReference>
<dbReference type="GO" id="GO:0000466">
    <property type="term" value="P:maturation of 5.8S rRNA from tricistronic rRNA transcript (SSU-rRNA, 5.8S rRNA, LSU-rRNA)"/>
    <property type="evidence" value="ECO:0007669"/>
    <property type="project" value="UniProtKB-UniRule"/>
</dbReference>
<dbReference type="GO" id="GO:0000463">
    <property type="term" value="P:maturation of LSU-rRNA from tricistronic rRNA transcript (SSU-rRNA, 5.8S rRNA, LSU-rRNA)"/>
    <property type="evidence" value="ECO:0007669"/>
    <property type="project" value="UniProtKB-UniRule"/>
</dbReference>
<dbReference type="GO" id="GO:0000462">
    <property type="term" value="P:maturation of SSU-rRNA from tricistronic rRNA transcript (SSU-rRNA, 5.8S rRNA, LSU-rRNA)"/>
    <property type="evidence" value="ECO:0007669"/>
    <property type="project" value="EnsemblFungi"/>
</dbReference>
<dbReference type="CDD" id="cd17709">
    <property type="entry name" value="BRCT_pescadillo_like"/>
    <property type="match status" value="1"/>
</dbReference>
<dbReference type="FunFam" id="3.40.50.10190:FF:000067">
    <property type="entry name" value="Pescadillo homolog"/>
    <property type="match status" value="1"/>
</dbReference>
<dbReference type="Gene3D" id="3.40.50.10190">
    <property type="entry name" value="BRCT domain"/>
    <property type="match status" value="1"/>
</dbReference>
<dbReference type="HAMAP" id="MF_03028">
    <property type="entry name" value="Pescadillo"/>
    <property type="match status" value="1"/>
</dbReference>
<dbReference type="InterPro" id="IPR001357">
    <property type="entry name" value="BRCT_dom"/>
</dbReference>
<dbReference type="InterPro" id="IPR036420">
    <property type="entry name" value="BRCT_dom_sf"/>
</dbReference>
<dbReference type="InterPro" id="IPR010613">
    <property type="entry name" value="PES"/>
</dbReference>
<dbReference type="PANTHER" id="PTHR12221">
    <property type="entry name" value="PESCADILLO - RELATED"/>
    <property type="match status" value="1"/>
</dbReference>
<dbReference type="PANTHER" id="PTHR12221:SF6">
    <property type="entry name" value="PESCADILLO HOMOLOG"/>
    <property type="match status" value="1"/>
</dbReference>
<dbReference type="Pfam" id="PF16589">
    <property type="entry name" value="BRCT_2"/>
    <property type="match status" value="1"/>
</dbReference>
<dbReference type="Pfam" id="PF06732">
    <property type="entry name" value="Pescadillo_N"/>
    <property type="match status" value="1"/>
</dbReference>
<dbReference type="SMART" id="SM00292">
    <property type="entry name" value="BRCT"/>
    <property type="match status" value="1"/>
</dbReference>
<dbReference type="SUPFAM" id="SSF52113">
    <property type="entry name" value="BRCT domain"/>
    <property type="match status" value="1"/>
</dbReference>
<dbReference type="PROSITE" id="PS50172">
    <property type="entry name" value="BRCT"/>
    <property type="match status" value="1"/>
</dbReference>
<feature type="chain" id="PRO_0000370504" description="Pescadillo homolog">
    <location>
        <begin position="1"/>
        <end position="588"/>
    </location>
</feature>
<feature type="domain" description="BRCT" evidence="1">
    <location>
        <begin position="344"/>
        <end position="437"/>
    </location>
</feature>
<feature type="region of interest" description="Disordered" evidence="2">
    <location>
        <begin position="446"/>
        <end position="533"/>
    </location>
</feature>
<feature type="region of interest" description="Disordered" evidence="2">
    <location>
        <begin position="559"/>
        <end position="588"/>
    </location>
</feature>
<feature type="coiled-coil region" evidence="1">
    <location>
        <begin position="512"/>
        <end position="588"/>
    </location>
</feature>
<feature type="compositionally biased region" description="Acidic residues" evidence="2">
    <location>
        <begin position="460"/>
        <end position="493"/>
    </location>
</feature>
<feature type="compositionally biased region" description="Basic and acidic residues" evidence="2">
    <location>
        <begin position="510"/>
        <end position="519"/>
    </location>
</feature>
<feature type="compositionally biased region" description="Basic and acidic residues" evidence="2">
    <location>
        <begin position="576"/>
        <end position="588"/>
    </location>
</feature>
<keyword id="KW-0175">Coiled coil</keyword>
<keyword id="KW-0539">Nucleus</keyword>
<keyword id="KW-1185">Reference proteome</keyword>
<keyword id="KW-0690">Ribosome biogenesis</keyword>
<keyword id="KW-0698">rRNA processing</keyword>
<reference key="1">
    <citation type="journal article" date="2007" name="Proc. Natl. Acad. Sci. U.S.A.">
        <title>Independent sorting-out of thousands of duplicated gene pairs in two yeast species descended from a whole-genome duplication.</title>
        <authorList>
            <person name="Scannell D.R."/>
            <person name="Frank A.C."/>
            <person name="Conant G.C."/>
            <person name="Byrne K.P."/>
            <person name="Woolfit M."/>
            <person name="Wolfe K.H."/>
        </authorList>
    </citation>
    <scope>NUCLEOTIDE SEQUENCE [LARGE SCALE GENOMIC DNA]</scope>
    <source>
        <strain>ATCC 22028 / DSM 70294 / BCRC 21397 / CBS 2163 / NBRC 10782 / NRRL Y-8283 / UCD 57-17</strain>
    </source>
</reference>
<evidence type="ECO:0000255" key="1">
    <source>
        <dbReference type="HAMAP-Rule" id="MF_03028"/>
    </source>
</evidence>
<evidence type="ECO:0000256" key="2">
    <source>
        <dbReference type="SAM" id="MobiDB-lite"/>
    </source>
</evidence>
<protein>
    <recommendedName>
        <fullName evidence="1">Pescadillo homolog</fullName>
    </recommendedName>
    <alternativeName>
        <fullName evidence="1">Nucleolar protein 7 homolog</fullName>
    </alternativeName>
</protein>